<proteinExistence type="inferred from homology"/>
<gene>
    <name evidence="1" type="primary">lig</name>
    <name type="ordered locus">OE_2298F</name>
</gene>
<sequence length="561" mass="59620">MKFGSFATFAADIEATDADLDVVALVAELFDAADSDLDVVARFVQGRVFPAHSETKLDIGPQLCYTALSRAAGRNVDADDIEARLAETGDIGAVAGSLDLGGQTGLAAFGGGDDHADGLTVSGVADELAALAAAAGDGSQSEKVTLLFGLFNQCTSREARYLARLVLGEMRIGVGEGAVRDAIAEAFDVPTAAVQRALQVSNDYGLVAETARDSGTDALDAMGLEVGRPVQAMLAQAGTVTDALDEWHEAAVETKFDGARVQVHYDGDDVVLYSRNMENVTGALPELVEFVENNVTAPVIIDGEAVAADEDGDPLPFQEILKRFRRKHDVAAMREEISVELHAFDCLHAPSADGGEDLLDAPFSDRHRRLRSVVDDASAVSEVLVTDDADEIAAFEATALEGGHEGIMLKNPAAPYTPGDRGKDWLKRKPDVETLDLVVTGAEWGEGRRASVLGTFLLSARDAAGDGFETIGKVATGLTDEELAALSDRLEPHVRSEDGQTVDIEPAVVLEVGYEEIQASPTYSSGYALRFPRFVSVREDKTPTTADTIERVERLAAQQQQ</sequence>
<dbReference type="EC" id="6.5.1.1" evidence="1"/>
<dbReference type="EMBL" id="AM774415">
    <property type="protein sequence ID" value="CAP13594.1"/>
    <property type="molecule type" value="Genomic_DNA"/>
</dbReference>
<dbReference type="SMR" id="B0R4C9"/>
<dbReference type="EnsemblBacteria" id="CAP13594">
    <property type="protein sequence ID" value="CAP13594"/>
    <property type="gene ID" value="OE_2298F"/>
</dbReference>
<dbReference type="KEGG" id="hsl:OE_2298F"/>
<dbReference type="HOGENOM" id="CLU_005138_6_0_2"/>
<dbReference type="PhylomeDB" id="B0R4C9"/>
<dbReference type="Proteomes" id="UP000001321">
    <property type="component" value="Chromosome"/>
</dbReference>
<dbReference type="GO" id="GO:0005524">
    <property type="term" value="F:ATP binding"/>
    <property type="evidence" value="ECO:0007669"/>
    <property type="project" value="UniProtKB-UniRule"/>
</dbReference>
<dbReference type="GO" id="GO:0003677">
    <property type="term" value="F:DNA binding"/>
    <property type="evidence" value="ECO:0007669"/>
    <property type="project" value="InterPro"/>
</dbReference>
<dbReference type="GO" id="GO:0003910">
    <property type="term" value="F:DNA ligase (ATP) activity"/>
    <property type="evidence" value="ECO:0007669"/>
    <property type="project" value="UniProtKB-UniRule"/>
</dbReference>
<dbReference type="GO" id="GO:0046872">
    <property type="term" value="F:metal ion binding"/>
    <property type="evidence" value="ECO:0007669"/>
    <property type="project" value="UniProtKB-KW"/>
</dbReference>
<dbReference type="GO" id="GO:0051301">
    <property type="term" value="P:cell division"/>
    <property type="evidence" value="ECO:0007669"/>
    <property type="project" value="UniProtKB-KW"/>
</dbReference>
<dbReference type="GO" id="GO:0071897">
    <property type="term" value="P:DNA biosynthetic process"/>
    <property type="evidence" value="ECO:0007669"/>
    <property type="project" value="InterPro"/>
</dbReference>
<dbReference type="GO" id="GO:0006310">
    <property type="term" value="P:DNA recombination"/>
    <property type="evidence" value="ECO:0007669"/>
    <property type="project" value="UniProtKB-UniRule"/>
</dbReference>
<dbReference type="GO" id="GO:0006281">
    <property type="term" value="P:DNA repair"/>
    <property type="evidence" value="ECO:0007669"/>
    <property type="project" value="UniProtKB-UniRule"/>
</dbReference>
<dbReference type="GO" id="GO:0006273">
    <property type="term" value="P:lagging strand elongation"/>
    <property type="evidence" value="ECO:0007669"/>
    <property type="project" value="TreeGrafter"/>
</dbReference>
<dbReference type="CDD" id="cd07901">
    <property type="entry name" value="Adenylation_DNA_ligase_Arch_LigB"/>
    <property type="match status" value="1"/>
</dbReference>
<dbReference type="CDD" id="cd07972">
    <property type="entry name" value="OBF_DNA_ligase_Arch_LigB"/>
    <property type="match status" value="1"/>
</dbReference>
<dbReference type="FunFam" id="1.10.3260.10:FF:000007">
    <property type="entry name" value="DNA ligase"/>
    <property type="match status" value="1"/>
</dbReference>
<dbReference type="FunFam" id="2.40.50.140:FF:000163">
    <property type="entry name" value="Probable DNA ligase"/>
    <property type="match status" value="1"/>
</dbReference>
<dbReference type="FunFam" id="3.30.470.30:FF:000012">
    <property type="entry name" value="Probable DNA ligase"/>
    <property type="match status" value="1"/>
</dbReference>
<dbReference type="Gene3D" id="1.10.3260.10">
    <property type="entry name" value="DNA ligase, ATP-dependent, N-terminal domain"/>
    <property type="match status" value="1"/>
</dbReference>
<dbReference type="Gene3D" id="3.30.470.30">
    <property type="entry name" value="DNA ligase/mRNA capping enzyme"/>
    <property type="match status" value="1"/>
</dbReference>
<dbReference type="Gene3D" id="2.40.50.140">
    <property type="entry name" value="Nucleic acid-binding proteins"/>
    <property type="match status" value="1"/>
</dbReference>
<dbReference type="HAMAP" id="MF_00407">
    <property type="entry name" value="DNA_ligase"/>
    <property type="match status" value="1"/>
</dbReference>
<dbReference type="InterPro" id="IPR050191">
    <property type="entry name" value="ATP-dep_DNA_ligase"/>
</dbReference>
<dbReference type="InterPro" id="IPR022865">
    <property type="entry name" value="DNA_ligae_ATP-dep_bac/arc"/>
</dbReference>
<dbReference type="InterPro" id="IPR000977">
    <property type="entry name" value="DNA_ligase_ATP-dep"/>
</dbReference>
<dbReference type="InterPro" id="IPR012309">
    <property type="entry name" value="DNA_ligase_ATP-dep_C"/>
</dbReference>
<dbReference type="InterPro" id="IPR012310">
    <property type="entry name" value="DNA_ligase_ATP-dep_cent"/>
</dbReference>
<dbReference type="InterPro" id="IPR016059">
    <property type="entry name" value="DNA_ligase_ATP-dep_CS"/>
</dbReference>
<dbReference type="InterPro" id="IPR012308">
    <property type="entry name" value="DNA_ligase_ATP-dep_N"/>
</dbReference>
<dbReference type="InterPro" id="IPR036599">
    <property type="entry name" value="DNA_ligase_N_sf"/>
</dbReference>
<dbReference type="InterPro" id="IPR054890">
    <property type="entry name" value="LigA_Halo"/>
</dbReference>
<dbReference type="InterPro" id="IPR012340">
    <property type="entry name" value="NA-bd_OB-fold"/>
</dbReference>
<dbReference type="NCBIfam" id="TIGR00574">
    <property type="entry name" value="dnl1"/>
    <property type="match status" value="1"/>
</dbReference>
<dbReference type="NCBIfam" id="NF041331">
    <property type="entry name" value="LigA_Halo"/>
    <property type="match status" value="1"/>
</dbReference>
<dbReference type="PANTHER" id="PTHR45674:SF7">
    <property type="entry name" value="DNA LIGASE"/>
    <property type="match status" value="1"/>
</dbReference>
<dbReference type="PANTHER" id="PTHR45674">
    <property type="entry name" value="DNA LIGASE 1/3 FAMILY MEMBER"/>
    <property type="match status" value="1"/>
</dbReference>
<dbReference type="Pfam" id="PF04679">
    <property type="entry name" value="DNA_ligase_A_C"/>
    <property type="match status" value="1"/>
</dbReference>
<dbReference type="Pfam" id="PF01068">
    <property type="entry name" value="DNA_ligase_A_M"/>
    <property type="match status" value="1"/>
</dbReference>
<dbReference type="Pfam" id="PF04675">
    <property type="entry name" value="DNA_ligase_A_N"/>
    <property type="match status" value="1"/>
</dbReference>
<dbReference type="SUPFAM" id="SSF117018">
    <property type="entry name" value="ATP-dependent DNA ligase DNA-binding domain"/>
    <property type="match status" value="1"/>
</dbReference>
<dbReference type="SUPFAM" id="SSF56091">
    <property type="entry name" value="DNA ligase/mRNA capping enzyme, catalytic domain"/>
    <property type="match status" value="1"/>
</dbReference>
<dbReference type="SUPFAM" id="SSF50249">
    <property type="entry name" value="Nucleic acid-binding proteins"/>
    <property type="match status" value="1"/>
</dbReference>
<dbReference type="PROSITE" id="PS00697">
    <property type="entry name" value="DNA_LIGASE_A1"/>
    <property type="match status" value="1"/>
</dbReference>
<dbReference type="PROSITE" id="PS50160">
    <property type="entry name" value="DNA_LIGASE_A3"/>
    <property type="match status" value="1"/>
</dbReference>
<reference key="1">
    <citation type="journal article" date="2008" name="Genomics">
        <title>Evolution in the laboratory: the genome of Halobacterium salinarum strain R1 compared to that of strain NRC-1.</title>
        <authorList>
            <person name="Pfeiffer F."/>
            <person name="Schuster S.C."/>
            <person name="Broicher A."/>
            <person name="Falb M."/>
            <person name="Palm P."/>
            <person name="Rodewald K."/>
            <person name="Ruepp A."/>
            <person name="Soppa J."/>
            <person name="Tittor J."/>
            <person name="Oesterhelt D."/>
        </authorList>
    </citation>
    <scope>NUCLEOTIDE SEQUENCE [LARGE SCALE GENOMIC DNA]</scope>
    <source>
        <strain>ATCC 29341 / DSM 671 / R1</strain>
    </source>
</reference>
<protein>
    <recommendedName>
        <fullName evidence="1">DNA ligase</fullName>
        <ecNumber evidence="1">6.5.1.1</ecNumber>
    </recommendedName>
    <alternativeName>
        <fullName evidence="1">Polydeoxyribonucleotide synthase [ATP]</fullName>
    </alternativeName>
</protein>
<comment type="function">
    <text evidence="1">DNA ligase that seals nicks in double-stranded DNA during DNA replication, DNA recombination and DNA repair.</text>
</comment>
<comment type="catalytic activity">
    <reaction evidence="1">
        <text>ATP + (deoxyribonucleotide)n-3'-hydroxyl + 5'-phospho-(deoxyribonucleotide)m = (deoxyribonucleotide)n+m + AMP + diphosphate.</text>
        <dbReference type="EC" id="6.5.1.1"/>
    </reaction>
</comment>
<comment type="cofactor">
    <cofactor evidence="1">
        <name>Mg(2+)</name>
        <dbReference type="ChEBI" id="CHEBI:18420"/>
    </cofactor>
</comment>
<comment type="similarity">
    <text evidence="1">Belongs to the ATP-dependent DNA ligase family.</text>
</comment>
<name>DNLI_HALS3</name>
<organism>
    <name type="scientific">Halobacterium salinarum (strain ATCC 29341 / DSM 671 / R1)</name>
    <dbReference type="NCBI Taxonomy" id="478009"/>
    <lineage>
        <taxon>Archaea</taxon>
        <taxon>Methanobacteriati</taxon>
        <taxon>Methanobacteriota</taxon>
        <taxon>Stenosarchaea group</taxon>
        <taxon>Halobacteria</taxon>
        <taxon>Halobacteriales</taxon>
        <taxon>Halobacteriaceae</taxon>
        <taxon>Halobacterium</taxon>
        <taxon>Halobacterium salinarum NRC-34001</taxon>
    </lineage>
</organism>
<accession>B0R4C9</accession>
<keyword id="KW-0067">ATP-binding</keyword>
<keyword id="KW-0131">Cell cycle</keyword>
<keyword id="KW-0132">Cell division</keyword>
<keyword id="KW-0227">DNA damage</keyword>
<keyword id="KW-0233">DNA recombination</keyword>
<keyword id="KW-0234">DNA repair</keyword>
<keyword id="KW-0235">DNA replication</keyword>
<keyword id="KW-0436">Ligase</keyword>
<keyword id="KW-0460">Magnesium</keyword>
<keyword id="KW-0479">Metal-binding</keyword>
<keyword id="KW-0547">Nucleotide-binding</keyword>
<feature type="chain" id="PRO_0000365245" description="DNA ligase">
    <location>
        <begin position="1"/>
        <end position="561"/>
    </location>
</feature>
<feature type="active site" description="N6-AMP-lysine intermediate" evidence="1">
    <location>
        <position position="255"/>
    </location>
</feature>
<feature type="binding site" evidence="1">
    <location>
        <position position="253"/>
    </location>
    <ligand>
        <name>ATP</name>
        <dbReference type="ChEBI" id="CHEBI:30616"/>
    </ligand>
</feature>
<feature type="binding site" evidence="1">
    <location>
        <position position="260"/>
    </location>
    <ligand>
        <name>ATP</name>
        <dbReference type="ChEBI" id="CHEBI:30616"/>
    </ligand>
</feature>
<feature type="binding site" evidence="1">
    <location>
        <position position="275"/>
    </location>
    <ligand>
        <name>ATP</name>
        <dbReference type="ChEBI" id="CHEBI:30616"/>
    </ligand>
</feature>
<feature type="binding site" evidence="1">
    <location>
        <position position="304"/>
    </location>
    <ligand>
        <name>ATP</name>
        <dbReference type="ChEBI" id="CHEBI:30616"/>
    </ligand>
</feature>
<feature type="binding site" evidence="1">
    <location>
        <position position="344"/>
    </location>
    <ligand>
        <name>ATP</name>
        <dbReference type="ChEBI" id="CHEBI:30616"/>
    </ligand>
</feature>
<feature type="binding site" evidence="1">
    <location>
        <position position="421"/>
    </location>
    <ligand>
        <name>ATP</name>
        <dbReference type="ChEBI" id="CHEBI:30616"/>
    </ligand>
</feature>
<feature type="binding site" evidence="1">
    <location>
        <position position="427"/>
    </location>
    <ligand>
        <name>ATP</name>
        <dbReference type="ChEBI" id="CHEBI:30616"/>
    </ligand>
</feature>
<evidence type="ECO:0000255" key="1">
    <source>
        <dbReference type="HAMAP-Rule" id="MF_00407"/>
    </source>
</evidence>